<gene>
    <name evidence="1" type="primary">cca</name>
    <name type="ordered locus">M1627_1246</name>
</gene>
<name>CCA_SACI3</name>
<comment type="function">
    <text evidence="1">Catalyzes the addition and repair of the essential 3'-terminal CCA sequence in tRNAs without using a nucleic acid template. Adds these three nucleotides in the order of C, C, and A to the tRNA nucleotide-73, using CTP and ATP as substrates and producing inorganic pyrophosphate. tRNA 3'-terminal CCA addition is required both for tRNA processing and repair. Also involved in tRNA surveillance by mediating tandem CCA addition to generate a CCACCA at the 3' terminus of unstable tRNAs. While stable tRNAs receive only 3'-terminal CCA, unstable tRNAs are marked with CCACCA and rapidly degraded.</text>
</comment>
<comment type="catalytic activity">
    <reaction evidence="1">
        <text>a tRNA precursor + 2 CTP + ATP = a tRNA with a 3' CCA end + 3 diphosphate</text>
        <dbReference type="Rhea" id="RHEA:14433"/>
        <dbReference type="Rhea" id="RHEA-COMP:10465"/>
        <dbReference type="Rhea" id="RHEA-COMP:10468"/>
        <dbReference type="ChEBI" id="CHEBI:30616"/>
        <dbReference type="ChEBI" id="CHEBI:33019"/>
        <dbReference type="ChEBI" id="CHEBI:37563"/>
        <dbReference type="ChEBI" id="CHEBI:74896"/>
        <dbReference type="ChEBI" id="CHEBI:83071"/>
        <dbReference type="EC" id="2.7.7.72"/>
    </reaction>
</comment>
<comment type="catalytic activity">
    <reaction evidence="1">
        <text>a tRNA with a 3' CCA end + 2 CTP + ATP = a tRNA with a 3' CCACCA end + 3 diphosphate</text>
        <dbReference type="Rhea" id="RHEA:76235"/>
        <dbReference type="Rhea" id="RHEA-COMP:10468"/>
        <dbReference type="Rhea" id="RHEA-COMP:18655"/>
        <dbReference type="ChEBI" id="CHEBI:30616"/>
        <dbReference type="ChEBI" id="CHEBI:33019"/>
        <dbReference type="ChEBI" id="CHEBI:37563"/>
        <dbReference type="ChEBI" id="CHEBI:83071"/>
        <dbReference type="ChEBI" id="CHEBI:195187"/>
    </reaction>
    <physiologicalReaction direction="left-to-right" evidence="1">
        <dbReference type="Rhea" id="RHEA:76236"/>
    </physiologicalReaction>
</comment>
<comment type="cofactor">
    <cofactor evidence="1">
        <name>Mg(2+)</name>
        <dbReference type="ChEBI" id="CHEBI:18420"/>
    </cofactor>
</comment>
<comment type="subunit">
    <text evidence="1">Homodimer.</text>
</comment>
<comment type="miscellaneous">
    <text evidence="1">A single active site specifically recognizes both ATP and CTP and is responsible for their addition.</text>
</comment>
<comment type="similarity">
    <text evidence="1">Belongs to the tRNA nucleotidyltransferase/poly(A) polymerase family. Archaeal CCA-adding enzyme subfamily.</text>
</comment>
<protein>
    <recommendedName>
        <fullName evidence="1">CCA-adding enzyme</fullName>
        <ecNumber evidence="1">2.7.7.72</ecNumber>
    </recommendedName>
    <alternativeName>
        <fullName evidence="1">CCA tRNA nucleotidyltransferase</fullName>
    </alternativeName>
    <alternativeName>
        <fullName evidence="1">tRNA CCA-pyrophosphorylase</fullName>
    </alternativeName>
    <alternativeName>
        <fullName evidence="1">tRNA adenylyl-/cytidylyl- transferase</fullName>
    </alternativeName>
    <alternativeName>
        <fullName evidence="1">tRNA nucleotidyltransferase</fullName>
    </alternativeName>
    <alternativeName>
        <fullName evidence="1">tRNA-NT</fullName>
    </alternativeName>
</protein>
<dbReference type="EC" id="2.7.7.72" evidence="1"/>
<dbReference type="EMBL" id="CP001401">
    <property type="protein sequence ID" value="ACP55133.1"/>
    <property type="molecule type" value="Genomic_DNA"/>
</dbReference>
<dbReference type="RefSeq" id="WP_012711203.1">
    <property type="nucleotide sequence ID" value="NC_012632.1"/>
</dbReference>
<dbReference type="SMR" id="C3N558"/>
<dbReference type="GeneID" id="84055702"/>
<dbReference type="KEGG" id="sim:M1627_1246"/>
<dbReference type="HOGENOM" id="CLU_044679_1_0_2"/>
<dbReference type="Proteomes" id="UP000002307">
    <property type="component" value="Chromosome"/>
</dbReference>
<dbReference type="GO" id="GO:0005524">
    <property type="term" value="F:ATP binding"/>
    <property type="evidence" value="ECO:0007669"/>
    <property type="project" value="UniProtKB-UniRule"/>
</dbReference>
<dbReference type="GO" id="GO:0004810">
    <property type="term" value="F:CCA tRNA nucleotidyltransferase activity"/>
    <property type="evidence" value="ECO:0007669"/>
    <property type="project" value="UniProtKB-UniRule"/>
</dbReference>
<dbReference type="GO" id="GO:0000287">
    <property type="term" value="F:magnesium ion binding"/>
    <property type="evidence" value="ECO:0007669"/>
    <property type="project" value="UniProtKB-UniRule"/>
</dbReference>
<dbReference type="GO" id="GO:0000049">
    <property type="term" value="F:tRNA binding"/>
    <property type="evidence" value="ECO:0007669"/>
    <property type="project" value="UniProtKB-UniRule"/>
</dbReference>
<dbReference type="GO" id="GO:0042245">
    <property type="term" value="P:RNA repair"/>
    <property type="evidence" value="ECO:0007669"/>
    <property type="project" value="UniProtKB-KW"/>
</dbReference>
<dbReference type="GO" id="GO:0001680">
    <property type="term" value="P:tRNA 3'-terminal CCA addition"/>
    <property type="evidence" value="ECO:0007669"/>
    <property type="project" value="UniProtKB-UniRule"/>
</dbReference>
<dbReference type="CDD" id="cd05400">
    <property type="entry name" value="NT_2-5OAS_ClassI-CCAase"/>
    <property type="match status" value="1"/>
</dbReference>
<dbReference type="Gene3D" id="3.30.460.10">
    <property type="entry name" value="Beta Polymerase, domain 2"/>
    <property type="match status" value="1"/>
</dbReference>
<dbReference type="Gene3D" id="1.10.1410.30">
    <property type="entry name" value="CCA tRNA nucleotidyltransferase, domain 2"/>
    <property type="match status" value="1"/>
</dbReference>
<dbReference type="Gene3D" id="3.30.70.590">
    <property type="entry name" value="Poly(A) polymerase predicted RNA binding domain"/>
    <property type="match status" value="1"/>
</dbReference>
<dbReference type="HAMAP" id="MF_01264">
    <property type="entry name" value="CCA_arch"/>
    <property type="match status" value="1"/>
</dbReference>
<dbReference type="InterPro" id="IPR048833">
    <property type="entry name" value="CAA_C"/>
</dbReference>
<dbReference type="InterPro" id="IPR008229">
    <property type="entry name" value="CCA-adding_arc"/>
</dbReference>
<dbReference type="InterPro" id="IPR042090">
    <property type="entry name" value="CCA_tRNA_nucleotrans_2"/>
</dbReference>
<dbReference type="InterPro" id="IPR006116">
    <property type="entry name" value="NT_2-5OAS_ClassI-CCAase"/>
</dbReference>
<dbReference type="InterPro" id="IPR043519">
    <property type="entry name" value="NT_sf"/>
</dbReference>
<dbReference type="InterPro" id="IPR011068">
    <property type="entry name" value="NuclTrfase_I-like_C"/>
</dbReference>
<dbReference type="InterPro" id="IPR002934">
    <property type="entry name" value="Polymerase_NTP_transf_dom"/>
</dbReference>
<dbReference type="InterPro" id="IPR015329">
    <property type="entry name" value="tRNA_NucTransf2"/>
</dbReference>
<dbReference type="NCBIfam" id="TIGR03671">
    <property type="entry name" value="cca_archaeal"/>
    <property type="match status" value="1"/>
</dbReference>
<dbReference type="PANTHER" id="PTHR39643">
    <property type="entry name" value="CCA-ADDING ENZYME"/>
    <property type="match status" value="1"/>
</dbReference>
<dbReference type="PANTHER" id="PTHR39643:SF1">
    <property type="entry name" value="CCA-ADDING ENZYME"/>
    <property type="match status" value="1"/>
</dbReference>
<dbReference type="Pfam" id="PF21133">
    <property type="entry name" value="CAA_C"/>
    <property type="match status" value="1"/>
</dbReference>
<dbReference type="Pfam" id="PF01909">
    <property type="entry name" value="NTP_transf_2"/>
    <property type="match status" value="1"/>
</dbReference>
<dbReference type="Pfam" id="PF09249">
    <property type="entry name" value="tRNA_NucTransf2"/>
    <property type="match status" value="1"/>
</dbReference>
<dbReference type="PIRSF" id="PIRSF005335">
    <property type="entry name" value="CCA_arch"/>
    <property type="match status" value="1"/>
</dbReference>
<dbReference type="SUPFAM" id="SSF81301">
    <property type="entry name" value="Nucleotidyltransferase"/>
    <property type="match status" value="1"/>
</dbReference>
<dbReference type="SUPFAM" id="SSF55003">
    <property type="entry name" value="PAP/Archaeal CCA-adding enzyme, C-terminal domain"/>
    <property type="match status" value="1"/>
</dbReference>
<dbReference type="SUPFAM" id="SSF81631">
    <property type="entry name" value="PAP/OAS1 substrate-binding domain"/>
    <property type="match status" value="1"/>
</dbReference>
<keyword id="KW-0067">ATP-binding</keyword>
<keyword id="KW-0460">Magnesium</keyword>
<keyword id="KW-0479">Metal-binding</keyword>
<keyword id="KW-0547">Nucleotide-binding</keyword>
<keyword id="KW-0548">Nucleotidyltransferase</keyword>
<keyword id="KW-0692">RNA repair</keyword>
<keyword id="KW-0694">RNA-binding</keyword>
<keyword id="KW-0808">Transferase</keyword>
<keyword id="KW-0819">tRNA processing</keyword>
<accession>C3N558</accession>
<reference key="1">
    <citation type="journal article" date="2009" name="Proc. Natl. Acad. Sci. U.S.A.">
        <title>Biogeography of the Sulfolobus islandicus pan-genome.</title>
        <authorList>
            <person name="Reno M.L."/>
            <person name="Held N.L."/>
            <person name="Fields C.J."/>
            <person name="Burke P.V."/>
            <person name="Whitaker R.J."/>
        </authorList>
    </citation>
    <scope>NUCLEOTIDE SEQUENCE [LARGE SCALE GENOMIC DNA]</scope>
    <source>
        <strain>M.16.27</strain>
    </source>
</reference>
<feature type="chain" id="PRO_1000214140" description="CCA-adding enzyme">
    <location>
        <begin position="1"/>
        <end position="412"/>
    </location>
</feature>
<feature type="binding site" evidence="1">
    <location>
        <position position="41"/>
    </location>
    <ligand>
        <name>ATP</name>
        <dbReference type="ChEBI" id="CHEBI:30616"/>
    </ligand>
</feature>
<feature type="binding site" evidence="1">
    <location>
        <position position="41"/>
    </location>
    <ligand>
        <name>CTP</name>
        <dbReference type="ChEBI" id="CHEBI:37563"/>
    </ligand>
</feature>
<feature type="binding site" evidence="1">
    <location>
        <position position="44"/>
    </location>
    <ligand>
        <name>ATP</name>
        <dbReference type="ChEBI" id="CHEBI:30616"/>
    </ligand>
</feature>
<feature type="binding site" evidence="1">
    <location>
        <position position="44"/>
    </location>
    <ligand>
        <name>CTP</name>
        <dbReference type="ChEBI" id="CHEBI:37563"/>
    </ligand>
</feature>
<feature type="binding site" evidence="1">
    <location>
        <position position="53"/>
    </location>
    <ligand>
        <name>Mg(2+)</name>
        <dbReference type="ChEBI" id="CHEBI:18420"/>
    </ligand>
</feature>
<feature type="binding site" evidence="1">
    <location>
        <position position="55"/>
    </location>
    <ligand>
        <name>Mg(2+)</name>
        <dbReference type="ChEBI" id="CHEBI:18420"/>
    </ligand>
</feature>
<feature type="binding site" evidence="1">
    <location>
        <position position="106"/>
    </location>
    <ligand>
        <name>Mg(2+)</name>
        <dbReference type="ChEBI" id="CHEBI:18420"/>
    </ligand>
</feature>
<feature type="binding site" evidence="1">
    <location>
        <position position="129"/>
    </location>
    <ligand>
        <name>ATP</name>
        <dbReference type="ChEBI" id="CHEBI:30616"/>
    </ligand>
</feature>
<feature type="binding site" evidence="1">
    <location>
        <position position="129"/>
    </location>
    <ligand>
        <name>CTP</name>
        <dbReference type="ChEBI" id="CHEBI:37563"/>
    </ligand>
</feature>
<feature type="binding site" evidence="1">
    <location>
        <position position="149"/>
    </location>
    <ligand>
        <name>ATP</name>
        <dbReference type="ChEBI" id="CHEBI:30616"/>
    </ligand>
</feature>
<feature type="binding site" evidence="1">
    <location>
        <position position="149"/>
    </location>
    <ligand>
        <name>CTP</name>
        <dbReference type="ChEBI" id="CHEBI:37563"/>
    </ligand>
</feature>
<feature type="binding site" evidence="1">
    <location>
        <position position="158"/>
    </location>
    <ligand>
        <name>ATP</name>
        <dbReference type="ChEBI" id="CHEBI:30616"/>
    </ligand>
</feature>
<feature type="binding site" evidence="1">
    <location>
        <position position="158"/>
    </location>
    <ligand>
        <name>CTP</name>
        <dbReference type="ChEBI" id="CHEBI:37563"/>
    </ligand>
</feature>
<evidence type="ECO:0000255" key="1">
    <source>
        <dbReference type="HAMAP-Rule" id="MF_01264"/>
    </source>
</evidence>
<proteinExistence type="inferred from homology"/>
<sequence length="412" mass="48023">MIEEEVLKIIKPTEEDKKGIEKVLEIIRERLNKLDFEVEGSFRKGTWLRQDTDIDVFVFYPKDVGKEYLERNALNDIINRIKDLDYTLAYAEHPYVIVNINNVEVDIVPALRVESGDKAITAVDRTPFHTKYVTSHLDERGKDEVRLLKRFMKGIGVYGAELKVQGFSGYATELLIIYYGNFRKVLEEASKWKHPIKIELTKPMKIFSEPLIIPDPVDPKRNVTAAVSLKNIATFSIAAKYYLKNPSIEFFFPSKKVEEKVKGDVLILRLNLDEKSSEDIVWGQIKRSVNKIERALKQYGFRVIDVQAWGDTNNITIAVQLESKNIGQYYLNIGPQYYSETIEDFIQKNDNIWVGEDGRLYSIKERKEYDAETIAKKNIVLKVKYNIESYWLQNTEDQQIMKFLRKTPTWLK</sequence>
<organism>
    <name type="scientific">Saccharolobus islandicus (strain M.16.27)</name>
    <name type="common">Sulfolobus islandicus</name>
    <dbReference type="NCBI Taxonomy" id="427318"/>
    <lineage>
        <taxon>Archaea</taxon>
        <taxon>Thermoproteota</taxon>
        <taxon>Thermoprotei</taxon>
        <taxon>Sulfolobales</taxon>
        <taxon>Sulfolobaceae</taxon>
        <taxon>Saccharolobus</taxon>
    </lineage>
</organism>